<sequence>MLLTTPSSRGSRAQSGIANVSWLALSLLLLFSPTLGSAKSAADYYVRSLPGAPEGPLLKMHAGHIEVDAQNNGNLFFWHYQNRHIANRQRTVIWLNGGPGCSSMDGALMEIGPYRLKDNHTLEYNNGSWDEFANLLFVDQPVGTGFSYVNTNSYIHELDEMSAQFITFLEKWFQLFPEYEGDDIYIAGESYAGQHIPYIAKAIQERNNKIQNDQSIRWNLRGIVIGNGWISPAQQYPSYLTFAYEEGLVTKGSSLAKDLEVYQSVCESKISASPNAINIRDCEEILQQILARTKDTNKQCYNMYDVRLRDTYPSCGMNWPTDLVDVKPYLQRPDVVQALNINPEKKSGWEECSGAVSSTFNAANSLPSVQLLPELLESGIPILLFSGDKDLICNHVGTEQLINNMKWNGGTGFETSPGVWAPRHDWTFEGEPAGIYQYARNLTYVLFYNASHMVPYDLPRQSRDMLDRFMKVDIANIGGKPADSRIDGEKLPQTSVGGHPNSTAAEQQAKEKIKETEWKAYAKSGEAALIVVIIGVTVWGFFIWRSRRRNRGYQGVYQRDIGSGSILERFHNKRSGPADVEAGDFDESELDNLHSPGLEQEHYAVGDDSDEESPNHQPAAPPSSTKPGGAQP</sequence>
<accession>B0XQ16</accession>
<dbReference type="EC" id="3.4.16.6"/>
<dbReference type="EMBL" id="DS499594">
    <property type="protein sequence ID" value="EDP56130.1"/>
    <property type="molecule type" value="Genomic_DNA"/>
</dbReference>
<dbReference type="SMR" id="B0XQ16"/>
<dbReference type="ESTHER" id="aspfu-kex1">
    <property type="family name" value="Carboxypeptidase_S10"/>
</dbReference>
<dbReference type="GlyCosmos" id="B0XQ16">
    <property type="glycosylation" value="5 sites, No reported glycans"/>
</dbReference>
<dbReference type="EnsemblFungi" id="EDP56130">
    <property type="protein sequence ID" value="EDP56130"/>
    <property type="gene ID" value="AFUB_008360"/>
</dbReference>
<dbReference type="VEuPathDB" id="FungiDB:AFUB_008360"/>
<dbReference type="HOGENOM" id="CLU_008523_11_0_1"/>
<dbReference type="OrthoDB" id="43059at5052"/>
<dbReference type="PhylomeDB" id="B0XQ16"/>
<dbReference type="Proteomes" id="UP000001699">
    <property type="component" value="Unassembled WGS sequence"/>
</dbReference>
<dbReference type="GO" id="GO:0016020">
    <property type="term" value="C:membrane"/>
    <property type="evidence" value="ECO:0007669"/>
    <property type="project" value="UniProtKB-KW"/>
</dbReference>
<dbReference type="GO" id="GO:0005802">
    <property type="term" value="C:trans-Golgi network"/>
    <property type="evidence" value="ECO:0007669"/>
    <property type="project" value="TreeGrafter"/>
</dbReference>
<dbReference type="GO" id="GO:0004185">
    <property type="term" value="F:serine-type carboxypeptidase activity"/>
    <property type="evidence" value="ECO:0007669"/>
    <property type="project" value="UniProtKB-EC"/>
</dbReference>
<dbReference type="GO" id="GO:0006915">
    <property type="term" value="P:apoptotic process"/>
    <property type="evidence" value="ECO:0007669"/>
    <property type="project" value="UniProtKB-KW"/>
</dbReference>
<dbReference type="GO" id="GO:0006508">
    <property type="term" value="P:proteolysis"/>
    <property type="evidence" value="ECO:0007669"/>
    <property type="project" value="UniProtKB-KW"/>
</dbReference>
<dbReference type="FunFam" id="3.40.50.1820:FF:000121">
    <property type="entry name" value="Carboxypeptidase D"/>
    <property type="match status" value="1"/>
</dbReference>
<dbReference type="Gene3D" id="3.40.50.1820">
    <property type="entry name" value="alpha/beta hydrolase"/>
    <property type="match status" value="1"/>
</dbReference>
<dbReference type="InterPro" id="IPR029058">
    <property type="entry name" value="AB_hydrolase_fold"/>
</dbReference>
<dbReference type="InterPro" id="IPR001563">
    <property type="entry name" value="Peptidase_S10"/>
</dbReference>
<dbReference type="InterPro" id="IPR018202">
    <property type="entry name" value="Ser_caboxypep_ser_AS"/>
</dbReference>
<dbReference type="PANTHER" id="PTHR11802:SF190">
    <property type="entry name" value="PHEROMONE-PROCESSING CARBOXYPEPTIDASE KEX1"/>
    <property type="match status" value="1"/>
</dbReference>
<dbReference type="PANTHER" id="PTHR11802">
    <property type="entry name" value="SERINE PROTEASE FAMILY S10 SERINE CARBOXYPEPTIDASE"/>
    <property type="match status" value="1"/>
</dbReference>
<dbReference type="Pfam" id="PF00450">
    <property type="entry name" value="Peptidase_S10"/>
    <property type="match status" value="1"/>
</dbReference>
<dbReference type="PRINTS" id="PR00724">
    <property type="entry name" value="CRBOXYPTASEC"/>
</dbReference>
<dbReference type="SUPFAM" id="SSF53474">
    <property type="entry name" value="alpha/beta-Hydrolases"/>
    <property type="match status" value="1"/>
</dbReference>
<dbReference type="PROSITE" id="PS00131">
    <property type="entry name" value="CARBOXYPEPT_SER_SER"/>
    <property type="match status" value="1"/>
</dbReference>
<keyword id="KW-0053">Apoptosis</keyword>
<keyword id="KW-0121">Carboxypeptidase</keyword>
<keyword id="KW-0325">Glycoprotein</keyword>
<keyword id="KW-0333">Golgi apparatus</keyword>
<keyword id="KW-0378">Hydrolase</keyword>
<keyword id="KW-0472">Membrane</keyword>
<keyword id="KW-0645">Protease</keyword>
<keyword id="KW-0732">Signal</keyword>
<keyword id="KW-0812">Transmembrane</keyword>
<keyword id="KW-1133">Transmembrane helix</keyword>
<organism>
    <name type="scientific">Aspergillus fumigatus (strain CBS 144.89 / FGSC A1163 / CEA10)</name>
    <name type="common">Neosartorya fumigata</name>
    <dbReference type="NCBI Taxonomy" id="451804"/>
    <lineage>
        <taxon>Eukaryota</taxon>
        <taxon>Fungi</taxon>
        <taxon>Dikarya</taxon>
        <taxon>Ascomycota</taxon>
        <taxon>Pezizomycotina</taxon>
        <taxon>Eurotiomycetes</taxon>
        <taxon>Eurotiomycetidae</taxon>
        <taxon>Eurotiales</taxon>
        <taxon>Aspergillaceae</taxon>
        <taxon>Aspergillus</taxon>
        <taxon>Aspergillus subgen. Fumigati</taxon>
    </lineage>
</organism>
<gene>
    <name type="primary">kex1</name>
    <name type="ORF">AFUB_008360</name>
</gene>
<name>KEX1_ASPFC</name>
<protein>
    <recommendedName>
        <fullName>Pheromone-processing carboxypeptidase kex1</fullName>
        <ecNumber>3.4.16.6</ecNumber>
    </recommendedName>
    <alternativeName>
        <fullName>Carboxypeptidase D</fullName>
    </alternativeName>
</protein>
<comment type="function">
    <text evidence="1">Protease with a carboxypeptidase B-like function involved in the C-terminal processing of the lysine and arginine residues from protein precursors. Promotes cell fusion and is involved in the programmed cell death (By similarity).</text>
</comment>
<comment type="catalytic activity">
    <reaction>
        <text>Preferential release of a C-terminal arginine or lysine residue.</text>
        <dbReference type="EC" id="3.4.16.6"/>
    </reaction>
</comment>
<comment type="subcellular location">
    <subcellularLocation>
        <location evidence="1">Golgi apparatus</location>
        <location evidence="1">trans-Golgi network membrane</location>
        <topology evidence="1">Single-pass type I membrane protein</topology>
    </subcellularLocation>
</comment>
<comment type="similarity">
    <text evidence="5">Belongs to the peptidase S10 family.</text>
</comment>
<feature type="signal peptide" evidence="2">
    <location>
        <begin position="1"/>
        <end position="38"/>
    </location>
</feature>
<feature type="chain" id="PRO_0000411903" description="Pheromone-processing carboxypeptidase kex1">
    <location>
        <begin position="39"/>
        <end position="632"/>
    </location>
</feature>
<feature type="topological domain" description="Lumenal" evidence="2">
    <location>
        <begin position="39"/>
        <end position="523"/>
    </location>
</feature>
<feature type="transmembrane region" description="Helical" evidence="2">
    <location>
        <begin position="524"/>
        <end position="544"/>
    </location>
</feature>
<feature type="topological domain" description="Cytoplasmic" evidence="2">
    <location>
        <begin position="545"/>
        <end position="632"/>
    </location>
</feature>
<feature type="region of interest" description="Disordered" evidence="4">
    <location>
        <begin position="480"/>
        <end position="509"/>
    </location>
</feature>
<feature type="region of interest" description="Disordered" evidence="4">
    <location>
        <begin position="574"/>
        <end position="632"/>
    </location>
</feature>
<feature type="compositionally biased region" description="Polar residues" evidence="4">
    <location>
        <begin position="492"/>
        <end position="506"/>
    </location>
</feature>
<feature type="compositionally biased region" description="Acidic residues" evidence="4">
    <location>
        <begin position="581"/>
        <end position="590"/>
    </location>
</feature>
<feature type="active site" evidence="3">
    <location>
        <position position="190"/>
    </location>
</feature>
<feature type="active site" evidence="3">
    <location>
        <position position="390"/>
    </location>
</feature>
<feature type="active site" evidence="3">
    <location>
        <position position="452"/>
    </location>
</feature>
<feature type="glycosylation site" description="N-linked (GlcNAc...) asparagine" evidence="2">
    <location>
        <position position="119"/>
    </location>
</feature>
<feature type="glycosylation site" description="N-linked (GlcNAc...) asparagine" evidence="2">
    <location>
        <position position="126"/>
    </location>
</feature>
<feature type="glycosylation site" description="N-linked (GlcNAc...) asparagine" evidence="2">
    <location>
        <position position="441"/>
    </location>
</feature>
<feature type="glycosylation site" description="N-linked (GlcNAc...) asparagine" evidence="2">
    <location>
        <position position="449"/>
    </location>
</feature>
<feature type="glycosylation site" description="N-linked (GlcNAc...) asparagine" evidence="2">
    <location>
        <position position="501"/>
    </location>
</feature>
<proteinExistence type="inferred from homology"/>
<reference key="1">
    <citation type="journal article" date="2008" name="PLoS Genet.">
        <title>Genomic islands in the pathogenic filamentous fungus Aspergillus fumigatus.</title>
        <authorList>
            <person name="Fedorova N.D."/>
            <person name="Khaldi N."/>
            <person name="Joardar V.S."/>
            <person name="Maiti R."/>
            <person name="Amedeo P."/>
            <person name="Anderson M.J."/>
            <person name="Crabtree J."/>
            <person name="Silva J.C."/>
            <person name="Badger J.H."/>
            <person name="Albarraq A."/>
            <person name="Angiuoli S."/>
            <person name="Bussey H."/>
            <person name="Bowyer P."/>
            <person name="Cotty P.J."/>
            <person name="Dyer P.S."/>
            <person name="Egan A."/>
            <person name="Galens K."/>
            <person name="Fraser-Liggett C.M."/>
            <person name="Haas B.J."/>
            <person name="Inman J.M."/>
            <person name="Kent R."/>
            <person name="Lemieux S."/>
            <person name="Malavazi I."/>
            <person name="Orvis J."/>
            <person name="Roemer T."/>
            <person name="Ronning C.M."/>
            <person name="Sundaram J.P."/>
            <person name="Sutton G."/>
            <person name="Turner G."/>
            <person name="Venter J.C."/>
            <person name="White O.R."/>
            <person name="Whitty B.R."/>
            <person name="Youngman P."/>
            <person name="Wolfe K.H."/>
            <person name="Goldman G.H."/>
            <person name="Wortman J.R."/>
            <person name="Jiang B."/>
            <person name="Denning D.W."/>
            <person name="Nierman W.C."/>
        </authorList>
    </citation>
    <scope>NUCLEOTIDE SEQUENCE [LARGE SCALE GENOMIC DNA]</scope>
    <source>
        <strain>CBS 144.89 / FGSC A1163 / CEA10</strain>
    </source>
</reference>
<evidence type="ECO:0000250" key="1"/>
<evidence type="ECO:0000255" key="2"/>
<evidence type="ECO:0000255" key="3">
    <source>
        <dbReference type="PROSITE-ProRule" id="PRU10074"/>
    </source>
</evidence>
<evidence type="ECO:0000256" key="4">
    <source>
        <dbReference type="SAM" id="MobiDB-lite"/>
    </source>
</evidence>
<evidence type="ECO:0000305" key="5"/>